<evidence type="ECO:0000255" key="1">
    <source>
        <dbReference type="HAMAP-Rule" id="MF_00145"/>
    </source>
</evidence>
<protein>
    <recommendedName>
        <fullName evidence="1">Phosphoglycerate kinase</fullName>
        <ecNumber evidence="1">2.7.2.3</ecNumber>
    </recommendedName>
</protein>
<feature type="chain" id="PRO_1000096374" description="Phosphoglycerate kinase">
    <location>
        <begin position="1"/>
        <end position="387"/>
    </location>
</feature>
<feature type="binding site" evidence="1">
    <location>
        <begin position="21"/>
        <end position="23"/>
    </location>
    <ligand>
        <name>substrate</name>
    </ligand>
</feature>
<feature type="binding site" evidence="1">
    <location>
        <position position="36"/>
    </location>
    <ligand>
        <name>substrate</name>
    </ligand>
</feature>
<feature type="binding site" evidence="1">
    <location>
        <begin position="59"/>
        <end position="62"/>
    </location>
    <ligand>
        <name>substrate</name>
    </ligand>
</feature>
<feature type="binding site" evidence="1">
    <location>
        <position position="113"/>
    </location>
    <ligand>
        <name>substrate</name>
    </ligand>
</feature>
<feature type="binding site" evidence="1">
    <location>
        <position position="146"/>
    </location>
    <ligand>
        <name>substrate</name>
    </ligand>
</feature>
<feature type="binding site" evidence="1">
    <location>
        <position position="197"/>
    </location>
    <ligand>
        <name>ATP</name>
        <dbReference type="ChEBI" id="CHEBI:30616"/>
    </ligand>
</feature>
<feature type="binding site" evidence="1">
    <location>
        <position position="314"/>
    </location>
    <ligand>
        <name>ATP</name>
        <dbReference type="ChEBI" id="CHEBI:30616"/>
    </ligand>
</feature>
<feature type="binding site" evidence="1">
    <location>
        <begin position="340"/>
        <end position="343"/>
    </location>
    <ligand>
        <name>ATP</name>
        <dbReference type="ChEBI" id="CHEBI:30616"/>
    </ligand>
</feature>
<comment type="catalytic activity">
    <reaction evidence="1">
        <text>(2R)-3-phosphoglycerate + ATP = (2R)-3-phospho-glyceroyl phosphate + ADP</text>
        <dbReference type="Rhea" id="RHEA:14801"/>
        <dbReference type="ChEBI" id="CHEBI:30616"/>
        <dbReference type="ChEBI" id="CHEBI:57604"/>
        <dbReference type="ChEBI" id="CHEBI:58272"/>
        <dbReference type="ChEBI" id="CHEBI:456216"/>
        <dbReference type="EC" id="2.7.2.3"/>
    </reaction>
</comment>
<comment type="pathway">
    <text evidence="1">Carbohydrate degradation; glycolysis; pyruvate from D-glyceraldehyde 3-phosphate: step 2/5.</text>
</comment>
<comment type="subunit">
    <text evidence="1">Monomer.</text>
</comment>
<comment type="subcellular location">
    <subcellularLocation>
        <location evidence="1">Cytoplasm</location>
    </subcellularLocation>
</comment>
<comment type="similarity">
    <text evidence="1">Belongs to the phosphoglycerate kinase family.</text>
</comment>
<reference key="1">
    <citation type="journal article" date="2011" name="J. Bacteriol.">
        <title>Comparative genomics of 28 Salmonella enterica isolates: evidence for CRISPR-mediated adaptive sublineage evolution.</title>
        <authorList>
            <person name="Fricke W.F."/>
            <person name="Mammel M.K."/>
            <person name="McDermott P.F."/>
            <person name="Tartera C."/>
            <person name="White D.G."/>
            <person name="Leclerc J.E."/>
            <person name="Ravel J."/>
            <person name="Cebula T.A."/>
        </authorList>
    </citation>
    <scope>NUCLEOTIDE SEQUENCE [LARGE SCALE GENOMIC DNA]</scope>
    <source>
        <strain>SL254</strain>
    </source>
</reference>
<organism>
    <name type="scientific">Salmonella newport (strain SL254)</name>
    <dbReference type="NCBI Taxonomy" id="423368"/>
    <lineage>
        <taxon>Bacteria</taxon>
        <taxon>Pseudomonadati</taxon>
        <taxon>Pseudomonadota</taxon>
        <taxon>Gammaproteobacteria</taxon>
        <taxon>Enterobacterales</taxon>
        <taxon>Enterobacteriaceae</taxon>
        <taxon>Salmonella</taxon>
    </lineage>
</organism>
<accession>B4T5H1</accession>
<sequence>MSVIKMTDLDLAGKRVFIRADLNVPVKEGKVTSDARIRASLPTIELALKQGAKVMVTSHLGRPTEGEYNEEFSLLPVVNYLKDKLSNPVRLVKDYLDGVDVAEGELVVLENVRFNKGEKKDDEALSKKYAALCDVFVMDAFGTAHRAQASTHGIGKFADVACAGPLLAAELDALGKALKEPARPMVAIVGGSKVSTKLTVLDSLSKIADQLIVGGGIANTFVAAQGHSVGKSLYEADLVDEAKRLLTTCDIPVPTDVRVATEFSETAPATLKSVNDVKEDEQILDIGDASAQQLAEILKNAKTILWNGPVGVFEFPNFRKGTEIVANAIADSEAFSIAGGGDTLAAIDLFGIADKISYISTGGGAFLEFVEGKVLPAVAMLEERAKK</sequence>
<proteinExistence type="inferred from homology"/>
<name>PGK_SALNS</name>
<dbReference type="EC" id="2.7.2.3" evidence="1"/>
<dbReference type="EMBL" id="CP001113">
    <property type="protein sequence ID" value="ACF64952.1"/>
    <property type="molecule type" value="Genomic_DNA"/>
</dbReference>
<dbReference type="RefSeq" id="WP_000111274.1">
    <property type="nucleotide sequence ID" value="NZ_CCMR01000001.1"/>
</dbReference>
<dbReference type="SMR" id="B4T5H1"/>
<dbReference type="KEGG" id="see:SNSL254_A3309"/>
<dbReference type="HOGENOM" id="CLU_025427_0_2_6"/>
<dbReference type="UniPathway" id="UPA00109">
    <property type="reaction ID" value="UER00185"/>
</dbReference>
<dbReference type="Proteomes" id="UP000008824">
    <property type="component" value="Chromosome"/>
</dbReference>
<dbReference type="GO" id="GO:0005829">
    <property type="term" value="C:cytosol"/>
    <property type="evidence" value="ECO:0007669"/>
    <property type="project" value="TreeGrafter"/>
</dbReference>
<dbReference type="GO" id="GO:0043531">
    <property type="term" value="F:ADP binding"/>
    <property type="evidence" value="ECO:0007669"/>
    <property type="project" value="TreeGrafter"/>
</dbReference>
<dbReference type="GO" id="GO:0005524">
    <property type="term" value="F:ATP binding"/>
    <property type="evidence" value="ECO:0007669"/>
    <property type="project" value="UniProtKB-KW"/>
</dbReference>
<dbReference type="GO" id="GO:0004618">
    <property type="term" value="F:phosphoglycerate kinase activity"/>
    <property type="evidence" value="ECO:0007669"/>
    <property type="project" value="UniProtKB-UniRule"/>
</dbReference>
<dbReference type="GO" id="GO:0006094">
    <property type="term" value="P:gluconeogenesis"/>
    <property type="evidence" value="ECO:0007669"/>
    <property type="project" value="TreeGrafter"/>
</dbReference>
<dbReference type="GO" id="GO:0006096">
    <property type="term" value="P:glycolytic process"/>
    <property type="evidence" value="ECO:0007669"/>
    <property type="project" value="UniProtKB-UniRule"/>
</dbReference>
<dbReference type="FunFam" id="3.40.50.1260:FF:000001">
    <property type="entry name" value="Phosphoglycerate kinase"/>
    <property type="match status" value="1"/>
</dbReference>
<dbReference type="FunFam" id="3.40.50.1260:FF:000002">
    <property type="entry name" value="Phosphoglycerate kinase"/>
    <property type="match status" value="1"/>
</dbReference>
<dbReference type="Gene3D" id="3.40.50.1260">
    <property type="entry name" value="Phosphoglycerate kinase, N-terminal domain"/>
    <property type="match status" value="2"/>
</dbReference>
<dbReference type="HAMAP" id="MF_00145">
    <property type="entry name" value="Phosphoglyc_kinase"/>
    <property type="match status" value="1"/>
</dbReference>
<dbReference type="InterPro" id="IPR001576">
    <property type="entry name" value="Phosphoglycerate_kinase"/>
</dbReference>
<dbReference type="InterPro" id="IPR015911">
    <property type="entry name" value="Phosphoglycerate_kinase_CS"/>
</dbReference>
<dbReference type="InterPro" id="IPR015824">
    <property type="entry name" value="Phosphoglycerate_kinase_N"/>
</dbReference>
<dbReference type="InterPro" id="IPR036043">
    <property type="entry name" value="Phosphoglycerate_kinase_sf"/>
</dbReference>
<dbReference type="PANTHER" id="PTHR11406">
    <property type="entry name" value="PHOSPHOGLYCERATE KINASE"/>
    <property type="match status" value="1"/>
</dbReference>
<dbReference type="PANTHER" id="PTHR11406:SF23">
    <property type="entry name" value="PHOSPHOGLYCERATE KINASE 1, CHLOROPLASTIC-RELATED"/>
    <property type="match status" value="1"/>
</dbReference>
<dbReference type="Pfam" id="PF00162">
    <property type="entry name" value="PGK"/>
    <property type="match status" value="1"/>
</dbReference>
<dbReference type="PIRSF" id="PIRSF000724">
    <property type="entry name" value="Pgk"/>
    <property type="match status" value="1"/>
</dbReference>
<dbReference type="PRINTS" id="PR00477">
    <property type="entry name" value="PHGLYCKINASE"/>
</dbReference>
<dbReference type="SUPFAM" id="SSF53748">
    <property type="entry name" value="Phosphoglycerate kinase"/>
    <property type="match status" value="1"/>
</dbReference>
<dbReference type="PROSITE" id="PS00111">
    <property type="entry name" value="PGLYCERATE_KINASE"/>
    <property type="match status" value="1"/>
</dbReference>
<keyword id="KW-0067">ATP-binding</keyword>
<keyword id="KW-0963">Cytoplasm</keyword>
<keyword id="KW-0324">Glycolysis</keyword>
<keyword id="KW-0418">Kinase</keyword>
<keyword id="KW-0547">Nucleotide-binding</keyword>
<keyword id="KW-0808">Transferase</keyword>
<gene>
    <name evidence="1" type="primary">pgk</name>
    <name type="ordered locus">SNSL254_A3309</name>
</gene>